<comment type="function">
    <text evidence="1">Member of a network of 50S ribosomal subunit biogenesis factors which assembles along the 30S-50S interface, preventing incorrect 23S rRNA structures from forming. Promotes peptidyl transferase center (PTC) maturation.</text>
</comment>
<comment type="subcellular location">
    <subcellularLocation>
        <location evidence="1">Cytoplasm</location>
    </subcellularLocation>
    <text evidence="1">Associates with late stage pre-50S ribosomal subunits.</text>
</comment>
<comment type="similarity">
    <text evidence="1">Belongs to the DarP family.</text>
</comment>
<gene>
    <name evidence="1" type="primary">darP</name>
    <name type="ordered locus">SO_4079</name>
</gene>
<name>DARP_SHEON</name>
<feature type="chain" id="PRO_0000208229" description="Dual-action ribosomal maturation protein DarP">
    <location>
        <begin position="1"/>
        <end position="177"/>
    </location>
</feature>
<feature type="region of interest" description="Disordered" evidence="2">
    <location>
        <begin position="1"/>
        <end position="26"/>
    </location>
</feature>
<feature type="compositionally biased region" description="Basic and acidic residues" evidence="2">
    <location>
        <begin position="1"/>
        <end position="12"/>
    </location>
</feature>
<keyword id="KW-0963">Cytoplasm</keyword>
<keyword id="KW-1185">Reference proteome</keyword>
<keyword id="KW-0690">Ribosome biogenesis</keyword>
<keyword id="KW-0694">RNA-binding</keyword>
<keyword id="KW-0699">rRNA-binding</keyword>
<sequence>MKIVGDSEHFKQPYDSNDEYVSKTEDKRDCEAAQKVGMELVSLSKTQLDKIELDEHLYDSIQQAHKIKPKTEAYRRHMQYIGKLMRNVDIEPIKASLAVVLNKNSNETAKLQMFEKMRERLLTQGDGEIQTVVEHYPQLDRQKLRTLVRQATKELAKGPESKSSKELFKYLRSEIQD</sequence>
<accession>Q8EA30</accession>
<organism>
    <name type="scientific">Shewanella oneidensis (strain ATCC 700550 / JCM 31522 / CIP 106686 / LMG 19005 / NCIMB 14063 / MR-1)</name>
    <dbReference type="NCBI Taxonomy" id="211586"/>
    <lineage>
        <taxon>Bacteria</taxon>
        <taxon>Pseudomonadati</taxon>
        <taxon>Pseudomonadota</taxon>
        <taxon>Gammaproteobacteria</taxon>
        <taxon>Alteromonadales</taxon>
        <taxon>Shewanellaceae</taxon>
        <taxon>Shewanella</taxon>
    </lineage>
</organism>
<proteinExistence type="inferred from homology"/>
<evidence type="ECO:0000255" key="1">
    <source>
        <dbReference type="HAMAP-Rule" id="MF_00765"/>
    </source>
</evidence>
<evidence type="ECO:0000256" key="2">
    <source>
        <dbReference type="SAM" id="MobiDB-lite"/>
    </source>
</evidence>
<reference key="1">
    <citation type="journal article" date="2002" name="Nat. Biotechnol.">
        <title>Genome sequence of the dissimilatory metal ion-reducing bacterium Shewanella oneidensis.</title>
        <authorList>
            <person name="Heidelberg J.F."/>
            <person name="Paulsen I.T."/>
            <person name="Nelson K.E."/>
            <person name="Gaidos E.J."/>
            <person name="Nelson W.C."/>
            <person name="Read T.D."/>
            <person name="Eisen J.A."/>
            <person name="Seshadri R."/>
            <person name="Ward N.L."/>
            <person name="Methe B.A."/>
            <person name="Clayton R.A."/>
            <person name="Meyer T."/>
            <person name="Tsapin A."/>
            <person name="Scott J."/>
            <person name="Beanan M.J."/>
            <person name="Brinkac L.M."/>
            <person name="Daugherty S.C."/>
            <person name="DeBoy R.T."/>
            <person name="Dodson R.J."/>
            <person name="Durkin A.S."/>
            <person name="Haft D.H."/>
            <person name="Kolonay J.F."/>
            <person name="Madupu R."/>
            <person name="Peterson J.D."/>
            <person name="Umayam L.A."/>
            <person name="White O."/>
            <person name="Wolf A.M."/>
            <person name="Vamathevan J.J."/>
            <person name="Weidman J.F."/>
            <person name="Impraim M."/>
            <person name="Lee K."/>
            <person name="Berry K.J."/>
            <person name="Lee C."/>
            <person name="Mueller J."/>
            <person name="Khouri H.M."/>
            <person name="Gill J."/>
            <person name="Utterback T.R."/>
            <person name="McDonald L.A."/>
            <person name="Feldblyum T.V."/>
            <person name="Smith H.O."/>
            <person name="Venter J.C."/>
            <person name="Nealson K.H."/>
            <person name="Fraser C.M."/>
        </authorList>
    </citation>
    <scope>NUCLEOTIDE SEQUENCE [LARGE SCALE GENOMIC DNA]</scope>
    <source>
        <strain>ATCC 700550 / JCM 31522 / CIP 106686 / LMG 19005 / NCIMB 14063 / MR-1</strain>
    </source>
</reference>
<protein>
    <recommendedName>
        <fullName evidence="1">Dual-action ribosomal maturation protein DarP</fullName>
    </recommendedName>
    <alternativeName>
        <fullName evidence="1">Large ribosomal subunit assembly factor DarP</fullName>
    </alternativeName>
</protein>
<dbReference type="EMBL" id="AE014299">
    <property type="protein sequence ID" value="AAN57053.1"/>
    <property type="molecule type" value="Genomic_DNA"/>
</dbReference>
<dbReference type="RefSeq" id="NP_719609.1">
    <property type="nucleotide sequence ID" value="NC_004347.2"/>
</dbReference>
<dbReference type="RefSeq" id="WP_011073786.1">
    <property type="nucleotide sequence ID" value="NC_004347.2"/>
</dbReference>
<dbReference type="SMR" id="Q8EA30"/>
<dbReference type="STRING" id="211586.SO_4079"/>
<dbReference type="PaxDb" id="211586-SO_4079"/>
<dbReference type="KEGG" id="son:SO_4079"/>
<dbReference type="PATRIC" id="fig|211586.12.peg.3948"/>
<dbReference type="eggNOG" id="COG3028">
    <property type="taxonomic scope" value="Bacteria"/>
</dbReference>
<dbReference type="HOGENOM" id="CLU_106757_2_0_6"/>
<dbReference type="OrthoDB" id="5293604at2"/>
<dbReference type="PhylomeDB" id="Q8EA30"/>
<dbReference type="BioCyc" id="SONE211586:G1GMP-3770-MONOMER"/>
<dbReference type="Proteomes" id="UP000008186">
    <property type="component" value="Chromosome"/>
</dbReference>
<dbReference type="GO" id="GO:0005829">
    <property type="term" value="C:cytosol"/>
    <property type="evidence" value="ECO:0000318"/>
    <property type="project" value="GO_Central"/>
</dbReference>
<dbReference type="GO" id="GO:0043022">
    <property type="term" value="F:ribosome binding"/>
    <property type="evidence" value="ECO:0007669"/>
    <property type="project" value="UniProtKB-UniRule"/>
</dbReference>
<dbReference type="GO" id="GO:0019843">
    <property type="term" value="F:rRNA binding"/>
    <property type="evidence" value="ECO:0007669"/>
    <property type="project" value="UniProtKB-UniRule"/>
</dbReference>
<dbReference type="GO" id="GO:1902626">
    <property type="term" value="P:assembly of large subunit precursor of preribosome"/>
    <property type="evidence" value="ECO:0007669"/>
    <property type="project" value="UniProtKB-UniRule"/>
</dbReference>
<dbReference type="CDD" id="cd16331">
    <property type="entry name" value="YjgA-like"/>
    <property type="match status" value="1"/>
</dbReference>
<dbReference type="Gene3D" id="1.10.60.30">
    <property type="entry name" value="PSPTO4464-like domains"/>
    <property type="match status" value="2"/>
</dbReference>
<dbReference type="HAMAP" id="MF_00765">
    <property type="entry name" value="DarP"/>
    <property type="match status" value="1"/>
</dbReference>
<dbReference type="InterPro" id="IPR006839">
    <property type="entry name" value="DarP"/>
</dbReference>
<dbReference type="InterPro" id="IPR023153">
    <property type="entry name" value="DarP_sf"/>
</dbReference>
<dbReference type="NCBIfam" id="NF003593">
    <property type="entry name" value="PRK05255.1-1"/>
    <property type="match status" value="1"/>
</dbReference>
<dbReference type="PANTHER" id="PTHR38101">
    <property type="entry name" value="UPF0307 PROTEIN YJGA"/>
    <property type="match status" value="1"/>
</dbReference>
<dbReference type="PANTHER" id="PTHR38101:SF1">
    <property type="entry name" value="UPF0307 PROTEIN YJGA"/>
    <property type="match status" value="1"/>
</dbReference>
<dbReference type="Pfam" id="PF04751">
    <property type="entry name" value="DarP"/>
    <property type="match status" value="1"/>
</dbReference>
<dbReference type="PIRSF" id="PIRSF016183">
    <property type="entry name" value="UCP016183"/>
    <property type="match status" value="1"/>
</dbReference>
<dbReference type="SUPFAM" id="SSF158710">
    <property type="entry name" value="PSPTO4464-like"/>
    <property type="match status" value="1"/>
</dbReference>